<organism>
    <name type="scientific">Bothrops cotiara</name>
    <name type="common">Cotiara</name>
    <name type="synonym">Rhinocerophis cotiara</name>
    <dbReference type="NCBI Taxonomy" id="8727"/>
    <lineage>
        <taxon>Eukaryota</taxon>
        <taxon>Metazoa</taxon>
        <taxon>Chordata</taxon>
        <taxon>Craniata</taxon>
        <taxon>Vertebrata</taxon>
        <taxon>Euteleostomi</taxon>
        <taxon>Lepidosauria</taxon>
        <taxon>Squamata</taxon>
        <taxon>Bifurcata</taxon>
        <taxon>Unidentata</taxon>
        <taxon>Episquamata</taxon>
        <taxon>Toxicofera</taxon>
        <taxon>Serpentes</taxon>
        <taxon>Colubroidea</taxon>
        <taxon>Viperidae</taxon>
        <taxon>Crotalinae</taxon>
        <taxon>Bothrops</taxon>
    </lineage>
</organism>
<name>VM1_BOTCO</name>
<keyword id="KW-0106">Calcium</keyword>
<keyword id="KW-0903">Direct protein sequencing</keyword>
<keyword id="KW-1015">Disulfide bond</keyword>
<keyword id="KW-1199">Hemostasis impairing toxin</keyword>
<keyword id="KW-0378">Hydrolase</keyword>
<keyword id="KW-0479">Metal-binding</keyword>
<keyword id="KW-0482">Metalloprotease</keyword>
<keyword id="KW-0645">Protease</keyword>
<keyword id="KW-0964">Secreted</keyword>
<keyword id="KW-0800">Toxin</keyword>
<keyword id="KW-0862">Zinc</keyword>
<proteinExistence type="evidence at protein level"/>
<comment type="function">
    <text evidence="1">Snake venom metalloproteinase that impairs hemostasis in the envenomed animal.</text>
</comment>
<comment type="cofactor">
    <cofactor evidence="1">
        <name>Zn(2+)</name>
        <dbReference type="ChEBI" id="CHEBI:29105"/>
    </cofactor>
    <text evidence="1">Binds 1 zinc ion per subunit.</text>
</comment>
<comment type="subunit">
    <text evidence="1">Monomer.</text>
</comment>
<comment type="subcellular location">
    <subcellularLocation>
        <location evidence="1">Secreted</location>
    </subcellularLocation>
</comment>
<comment type="tissue specificity">
    <text>Expressed by the venom gland.</text>
</comment>
<comment type="PTM">
    <text evidence="1">Contains 3 disulfide bonds.</text>
</comment>
<comment type="similarity">
    <text evidence="2">Belongs to the venom metalloproteinase (M12B) family. P-I subfamily.</text>
</comment>
<protein>
    <recommendedName>
        <fullName>Snake venom metalloproteinase Bco22</fullName>
        <shortName>SVMP</shortName>
        <ecNumber>3.4.24.-</ecNumber>
    </recommendedName>
</protein>
<sequence length="15" mass="1845">TPEHQRYVELFIVVD</sequence>
<dbReference type="EC" id="3.4.24.-"/>
<dbReference type="GO" id="GO:0005576">
    <property type="term" value="C:extracellular region"/>
    <property type="evidence" value="ECO:0007669"/>
    <property type="project" value="UniProtKB-SubCell"/>
</dbReference>
<dbReference type="GO" id="GO:0046872">
    <property type="term" value="F:metal ion binding"/>
    <property type="evidence" value="ECO:0007669"/>
    <property type="project" value="UniProtKB-KW"/>
</dbReference>
<dbReference type="GO" id="GO:0008237">
    <property type="term" value="F:metallopeptidase activity"/>
    <property type="evidence" value="ECO:0007669"/>
    <property type="project" value="UniProtKB-KW"/>
</dbReference>
<dbReference type="GO" id="GO:0090729">
    <property type="term" value="F:toxin activity"/>
    <property type="evidence" value="ECO:0007669"/>
    <property type="project" value="UniProtKB-KW"/>
</dbReference>
<dbReference type="GO" id="GO:0006508">
    <property type="term" value="P:proteolysis"/>
    <property type="evidence" value="ECO:0007669"/>
    <property type="project" value="UniProtKB-KW"/>
</dbReference>
<reference key="1">
    <citation type="journal article" date="2008" name="J. Proteomics">
        <title>Snake venomics of the Brazilian pitvipers Bothrops cotiara and Bothrops fonsecai. Identification of taxonomy markers.</title>
        <authorList>
            <person name="Tashima A.K."/>
            <person name="Sanz L."/>
            <person name="Camargo A.C."/>
            <person name="Serrano S.M."/>
            <person name="Calvete J.J."/>
        </authorList>
    </citation>
    <scope>PROTEIN SEQUENCE</scope>
    <scope>IDENTIFICATION BY MASS SPECTROMETRY</scope>
    <source>
        <tissue>Venom</tissue>
    </source>
</reference>
<accession>P0DMH2</accession>
<feature type="chain" id="PRO_0000428812" description="Snake venom metalloproteinase Bco22">
    <location>
        <begin position="1"/>
        <end position="15" status="greater than"/>
    </location>
</feature>
<feature type="non-terminal residue">
    <location>
        <position position="15"/>
    </location>
</feature>
<evidence type="ECO:0000250" key="1"/>
<evidence type="ECO:0000305" key="2"/>